<keyword id="KW-0012">Acyltransferase</keyword>
<keyword id="KW-0963">Cytoplasm</keyword>
<keyword id="KW-1185">Reference proteome</keyword>
<keyword id="KW-0808">Transferase</keyword>
<comment type="catalytic activity">
    <reaction evidence="2">
        <text>2 acetyl-CoA = acetoacetyl-CoA + CoA</text>
        <dbReference type="Rhea" id="RHEA:21036"/>
        <dbReference type="ChEBI" id="CHEBI:57286"/>
        <dbReference type="ChEBI" id="CHEBI:57287"/>
        <dbReference type="ChEBI" id="CHEBI:57288"/>
        <dbReference type="EC" id="2.3.1.9"/>
    </reaction>
</comment>
<comment type="subcellular location">
    <subcellularLocation>
        <location evidence="1">Cytoplasm</location>
    </subcellularLocation>
</comment>
<comment type="similarity">
    <text evidence="3">Belongs to the thiolase-like superfamily. Thiolase family.</text>
</comment>
<proteinExistence type="inferred from homology"/>
<feature type="chain" id="PRO_0000270501" description="Probable acetyl-CoA acyltransferase">
    <location>
        <begin position="1"/>
        <end position="393"/>
    </location>
</feature>
<feature type="active site" description="Acyl-thioester intermediate" evidence="1">
    <location>
        <position position="88"/>
    </location>
</feature>
<feature type="active site" description="Proton acceptor" evidence="2">
    <location>
        <position position="349"/>
    </location>
</feature>
<feature type="active site" description="Proton acceptor" evidence="2">
    <location>
        <position position="378"/>
    </location>
</feature>
<evidence type="ECO:0000250" key="1"/>
<evidence type="ECO:0000255" key="2">
    <source>
        <dbReference type="PROSITE-ProRule" id="PRU10020"/>
    </source>
</evidence>
<evidence type="ECO:0000305" key="3"/>
<reference key="1">
    <citation type="book" date="2006" name="Gram positive pathogens, 2nd edition">
        <title>The Staphylococcus aureus NCTC 8325 genome.</title>
        <editorList>
            <person name="Fischetti V."/>
            <person name="Novick R."/>
            <person name="Ferretti J."/>
            <person name="Portnoy D."/>
            <person name="Rood J."/>
        </editorList>
        <authorList>
            <person name="Gillaspy A.F."/>
            <person name="Worrell V."/>
            <person name="Orvis J."/>
            <person name="Roe B.A."/>
            <person name="Dyer D.W."/>
            <person name="Iandolo J.J."/>
        </authorList>
    </citation>
    <scope>NUCLEOTIDE SEQUENCE [LARGE SCALE GENOMIC DNA]</scope>
    <source>
        <strain>NCTC 8325 / PS 47</strain>
    </source>
</reference>
<accession>Q2G124</accession>
<dbReference type="EC" id="2.3.1.9"/>
<dbReference type="EMBL" id="CP000253">
    <property type="protein sequence ID" value="ABD29504.1"/>
    <property type="molecule type" value="Genomic_DNA"/>
</dbReference>
<dbReference type="RefSeq" id="WP_000199070.1">
    <property type="nucleotide sequence ID" value="NZ_LS483365.1"/>
</dbReference>
<dbReference type="RefSeq" id="YP_498926.1">
    <property type="nucleotide sequence ID" value="NC_007795.1"/>
</dbReference>
<dbReference type="SMR" id="Q2G124"/>
<dbReference type="STRING" id="93061.SAOUHSC_00336"/>
<dbReference type="PaxDb" id="1280-SAXN108_0404"/>
<dbReference type="GeneID" id="3919601"/>
<dbReference type="KEGG" id="sao:SAOUHSC_00336"/>
<dbReference type="PATRIC" id="fig|93061.5.peg.307"/>
<dbReference type="eggNOG" id="COG0183">
    <property type="taxonomic scope" value="Bacteria"/>
</dbReference>
<dbReference type="HOGENOM" id="CLU_031026_0_0_9"/>
<dbReference type="OrthoDB" id="9764892at2"/>
<dbReference type="PRO" id="PR:Q2G124"/>
<dbReference type="Proteomes" id="UP000008816">
    <property type="component" value="Chromosome"/>
</dbReference>
<dbReference type="GO" id="GO:0005737">
    <property type="term" value="C:cytoplasm"/>
    <property type="evidence" value="ECO:0007669"/>
    <property type="project" value="UniProtKB-SubCell"/>
</dbReference>
<dbReference type="GO" id="GO:0003985">
    <property type="term" value="F:acetyl-CoA C-acetyltransferase activity"/>
    <property type="evidence" value="ECO:0000318"/>
    <property type="project" value="GO_Central"/>
</dbReference>
<dbReference type="CDD" id="cd00751">
    <property type="entry name" value="thiolase"/>
    <property type="match status" value="1"/>
</dbReference>
<dbReference type="FunFam" id="3.40.47.10:FF:000010">
    <property type="entry name" value="Acetyl-CoA acetyltransferase (Thiolase)"/>
    <property type="match status" value="1"/>
</dbReference>
<dbReference type="Gene3D" id="3.40.47.10">
    <property type="match status" value="2"/>
</dbReference>
<dbReference type="InterPro" id="IPR002155">
    <property type="entry name" value="Thiolase"/>
</dbReference>
<dbReference type="InterPro" id="IPR016039">
    <property type="entry name" value="Thiolase-like"/>
</dbReference>
<dbReference type="InterPro" id="IPR020615">
    <property type="entry name" value="Thiolase_acyl_enz_int_AS"/>
</dbReference>
<dbReference type="InterPro" id="IPR020610">
    <property type="entry name" value="Thiolase_AS"/>
</dbReference>
<dbReference type="InterPro" id="IPR020617">
    <property type="entry name" value="Thiolase_C"/>
</dbReference>
<dbReference type="InterPro" id="IPR020613">
    <property type="entry name" value="Thiolase_CS"/>
</dbReference>
<dbReference type="InterPro" id="IPR020616">
    <property type="entry name" value="Thiolase_N"/>
</dbReference>
<dbReference type="NCBIfam" id="TIGR01930">
    <property type="entry name" value="AcCoA-C-Actrans"/>
    <property type="match status" value="1"/>
</dbReference>
<dbReference type="PANTHER" id="PTHR18919:SF107">
    <property type="entry name" value="ACETYL-COA ACETYLTRANSFERASE, CYTOSOLIC"/>
    <property type="match status" value="1"/>
</dbReference>
<dbReference type="PANTHER" id="PTHR18919">
    <property type="entry name" value="ACETYL-COA C-ACYLTRANSFERASE"/>
    <property type="match status" value="1"/>
</dbReference>
<dbReference type="Pfam" id="PF02803">
    <property type="entry name" value="Thiolase_C"/>
    <property type="match status" value="1"/>
</dbReference>
<dbReference type="Pfam" id="PF00108">
    <property type="entry name" value="Thiolase_N"/>
    <property type="match status" value="1"/>
</dbReference>
<dbReference type="PIRSF" id="PIRSF000429">
    <property type="entry name" value="Ac-CoA_Ac_transf"/>
    <property type="match status" value="1"/>
</dbReference>
<dbReference type="SUPFAM" id="SSF53901">
    <property type="entry name" value="Thiolase-like"/>
    <property type="match status" value="2"/>
</dbReference>
<dbReference type="PROSITE" id="PS00098">
    <property type="entry name" value="THIOLASE_1"/>
    <property type="match status" value="1"/>
</dbReference>
<dbReference type="PROSITE" id="PS00737">
    <property type="entry name" value="THIOLASE_2"/>
    <property type="match status" value="1"/>
</dbReference>
<dbReference type="PROSITE" id="PS00099">
    <property type="entry name" value="THIOLASE_3"/>
    <property type="match status" value="1"/>
</dbReference>
<gene>
    <name type="ordered locus">SAOUHSC_00336</name>
</gene>
<sequence length="393" mass="41704">MTRVVLAAAYRTPIGVFGGAFKDVPAYDLGATLIEHIIKETGLNPSEIDEVIIGNVLQAGQGQNPARIAAMKGGLPETVPAFTVNKVCGSGLKSIQLAYQSIVTGENDIVLAGGMENMSQSPMLVNNSRFGFKMGHQSMVDSMVYDGLTDVFNQYHMGITAENLVEQYGISREEQDTFAVNSQQKAVRAQQNGEFDSEIVPVSIPQRKGEPIVVTKDEGVRENVSVEKLSRLRPAFKKDGTVTAGNASGINDGAAMMLVMSEDKAKELNIEPLAVLDGFGSHGVDPSIMGIAPVGAVEKALKRSKKELSDIDVFELNEAFAAQSLAVDRELKLPPEKVNVKGGAIALGHPIGASGARVLVTLLHQLNDEVETGLTSLCIGGGQAIAAVVSKYK</sequence>
<name>THLA_STAA8</name>
<organism>
    <name type="scientific">Staphylococcus aureus (strain NCTC 8325 / PS 47)</name>
    <dbReference type="NCBI Taxonomy" id="93061"/>
    <lineage>
        <taxon>Bacteria</taxon>
        <taxon>Bacillati</taxon>
        <taxon>Bacillota</taxon>
        <taxon>Bacilli</taxon>
        <taxon>Bacillales</taxon>
        <taxon>Staphylococcaceae</taxon>
        <taxon>Staphylococcus</taxon>
    </lineage>
</organism>
<protein>
    <recommendedName>
        <fullName>Probable acetyl-CoA acyltransferase</fullName>
        <ecNumber>2.3.1.9</ecNumber>
    </recommendedName>
    <alternativeName>
        <fullName>Acetoacetyl-CoA thiolase</fullName>
    </alternativeName>
</protein>